<comment type="function">
    <text evidence="1">Essential cell division protein that coordinates cell division and chromosome segregation. The N-terminus is involved in assembly of the cell-division machinery. The C-terminus functions as a DNA motor that moves dsDNA in an ATP-dependent manner towards the dif recombination site, which is located within the replication terminus region. Translocation stops specifically at Xer-dif sites, where FtsK interacts with the Xer recombinase, allowing activation of chromosome unlinking by recombination. FtsK orienting polar sequences (KOPS) guide the direction of DNA translocation. FtsK can remove proteins from DNA as it translocates, but translocation stops specifically at XerCD-dif site, thereby preventing removal of XerC and XerD from dif (By similarity).</text>
</comment>
<comment type="subunit">
    <text evidence="1">Homohexamer. Forms a ring that surrounds DNA (By similarity).</text>
</comment>
<comment type="subcellular location">
    <subcellularLocation>
        <location evidence="1">Cell inner membrane</location>
        <topology evidence="1">Multi-pass membrane protein</topology>
    </subcellularLocation>
    <text evidence="1">Located at the septum.</text>
</comment>
<comment type="domain">
    <text evidence="1">Consists of an N-terminal domain, which is sufficient for the localization to the septal ring and is required for cell division, followed by a linker domain, and a C-terminal domain, which forms the translocation motor involved in chromosome segregation. The C-terminal domain can be further subdivided into alpha, beta and gamma subdomains. The alpha and beta subdomains multimerise to produce a hexameric ring, contain the nucleotide binding motif and form the DNA pump. The gamma subdomain is a regulatory subdomain that controls translocation of DNA by recognition of KOPS motifs and interacts with XerD recombinase (By similarity).</text>
</comment>
<comment type="similarity">
    <text evidence="4">Belongs to the FtsK/SpoIIIE/SftA family.</text>
</comment>
<gene>
    <name type="primary">ftsK</name>
    <name type="ordered locus">VV1_2950</name>
</gene>
<evidence type="ECO:0000250" key="1"/>
<evidence type="ECO:0000255" key="2"/>
<evidence type="ECO:0000255" key="3">
    <source>
        <dbReference type="PROSITE-ProRule" id="PRU00289"/>
    </source>
</evidence>
<evidence type="ECO:0000305" key="4"/>
<keyword id="KW-0067">ATP-binding</keyword>
<keyword id="KW-0131">Cell cycle</keyword>
<keyword id="KW-0132">Cell division</keyword>
<keyword id="KW-0997">Cell inner membrane</keyword>
<keyword id="KW-1003">Cell membrane</keyword>
<keyword id="KW-0159">Chromosome partition</keyword>
<keyword id="KW-0238">DNA-binding</keyword>
<keyword id="KW-0472">Membrane</keyword>
<keyword id="KW-0547">Nucleotide-binding</keyword>
<keyword id="KW-0812">Transmembrane</keyword>
<keyword id="KW-1133">Transmembrane helix</keyword>
<accession>Q8D8M2</accession>
<organism>
    <name type="scientific">Vibrio vulnificus (strain CMCP6)</name>
    <dbReference type="NCBI Taxonomy" id="216895"/>
    <lineage>
        <taxon>Bacteria</taxon>
        <taxon>Pseudomonadati</taxon>
        <taxon>Pseudomonadota</taxon>
        <taxon>Gammaproteobacteria</taxon>
        <taxon>Vibrionales</taxon>
        <taxon>Vibrionaceae</taxon>
        <taxon>Vibrio</taxon>
    </lineage>
</organism>
<protein>
    <recommendedName>
        <fullName>DNA translocase FtsK</fullName>
    </recommendedName>
</protein>
<sequence length="985" mass="108746">MFKENAKKVQTIIKTSEEAQSSRLNGFQRLKECCLILGVLTSAFLSIALLTFSPADPSWSQTSWGGDISNAGGQFGAWVADTLFFTFGLLAYLLPVLLVIVTWVFFRTRDEDEHIDLMLWGTRLLGLAILILTSCGLADINFDDIWYFSSGGVLGDVLNSLALPTLNLLGTTLVLLFAWGAGFTLLTGISWLSIVEWIGSLFLDVCQWALNRLRGEKTEVIAPELQPIALSDDEPKAQPQIEAQQDEIVEEERIPDPLPVEPVVQMRREYPIHMPQTVSYQTVSDELDELEDNSFERAKKLNATIEELEQEALSVNDLPDDTMSTERARYNVADIAQVSAEHSQTTQVEHAQDFSVDVEEFDHVISLSELDKISEEIDEPVMVGFAEEAPLHHNEAQRSAMASSAEPMFSHLGVEQTTQHTTQEEIVDLPVADSVGDVNPEMEDYVEEDEDQDQDVVAFQNMVSKAQQNMAATQNPFLMKQDTSLPVPKEPLPTLELLYHPEKRENFIDKEALEQVARLVESKLADYKITAEVVGIFPGPVITRFELDLAPGVKVSRISSLSMDLARSLSAMAVRVVEVIPGKPYVGLELPNMSRQTVYLSDVIDSPQFQNATSPTTVVLGQDIAGEALVADLAKMPHVLVAGTTGSGKSVGVNVMILSMLYKASPEDVRFIMIDPKMLELSVYEGIPHLLAEVVTDMKDASNALRWCVGEMERRYKLMSVMGVRNIKGFNEKLKMAADAGHPIHDPFWQEGDSMDTEPPLLEKLPYIVVVVDEFADLMMVVGKKVEELIARLAQKARAAGIHLILATQRPSVDVITGLIKANIPTRVAFTVSTKTDSRTILDQGGAESLLGMGDMLYLPPGSSHTIRVHGAFASDDDVHAVVNNWKARGKPNYIDEIISGEQGPESLLPGEQMESDEDLDPLFDQVVEHVVQSRRGSVSGVQRRFKIGYNRAARIVEQLEAQGIVSAPGHNGNREVLAPAPPRE</sequence>
<reference key="1">
    <citation type="submission" date="2002-12" db="EMBL/GenBank/DDBJ databases">
        <title>Complete genome sequence of Vibrio vulnificus CMCP6.</title>
        <authorList>
            <person name="Rhee J.H."/>
            <person name="Kim S.Y."/>
            <person name="Chung S.S."/>
            <person name="Kim J.J."/>
            <person name="Moon Y.H."/>
            <person name="Jeong H."/>
            <person name="Choy H.E."/>
        </authorList>
    </citation>
    <scope>NUCLEOTIDE SEQUENCE [LARGE SCALE GENOMIC DNA]</scope>
    <source>
        <strain>CMCP6</strain>
    </source>
</reference>
<reference key="2">
    <citation type="journal article" date="2011" name="Mol. Syst. Biol.">
        <title>Integrative genome-scale metabolic analysis of Vibrio vulnificus for drug targeting and discovery.</title>
        <authorList>
            <person name="Kim H.U."/>
            <person name="Kim S.Y."/>
            <person name="Jeong H."/>
            <person name="Kim T.Y."/>
            <person name="Kim J.J."/>
            <person name="Choy H.E."/>
            <person name="Yi K.Y."/>
            <person name="Rhee J.H."/>
            <person name="Lee S.Y."/>
        </authorList>
    </citation>
    <scope>SEQUENCE REVISION TO C-TERMINUS</scope>
    <source>
        <strain>CMCP6</strain>
    </source>
</reference>
<feature type="chain" id="PRO_0000098318" description="DNA translocase FtsK">
    <location>
        <begin position="1"/>
        <end position="985"/>
    </location>
</feature>
<feature type="transmembrane region" description="Helical" evidence="2">
    <location>
        <begin position="35"/>
        <end position="55"/>
    </location>
</feature>
<feature type="transmembrane region" description="Helical" evidence="2">
    <location>
        <begin position="84"/>
        <end position="104"/>
    </location>
</feature>
<feature type="transmembrane region" description="Helical" evidence="2">
    <location>
        <begin position="117"/>
        <end position="137"/>
    </location>
</feature>
<feature type="transmembrane region" description="Helical" evidence="2">
    <location>
        <begin position="145"/>
        <end position="165"/>
    </location>
</feature>
<feature type="transmembrane region" description="Helical" evidence="2">
    <location>
        <begin position="174"/>
        <end position="194"/>
    </location>
</feature>
<feature type="topological domain" description="Cytoplasmic" evidence="2">
    <location>
        <begin position="195"/>
        <end position="985"/>
    </location>
</feature>
<feature type="domain" description="FtsK" evidence="3">
    <location>
        <begin position="626"/>
        <end position="839"/>
    </location>
</feature>
<feature type="binding site" evidence="3">
    <location>
        <begin position="646"/>
        <end position="651"/>
    </location>
    <ligand>
        <name>ATP</name>
        <dbReference type="ChEBI" id="CHEBI:30616"/>
    </ligand>
</feature>
<dbReference type="EMBL" id="AE016795">
    <property type="protein sequence ID" value="AAO11281.2"/>
    <property type="molecule type" value="Genomic_DNA"/>
</dbReference>
<dbReference type="RefSeq" id="WP_011080766.1">
    <property type="nucleotide sequence ID" value="NC_004459.3"/>
</dbReference>
<dbReference type="SMR" id="Q8D8M2"/>
<dbReference type="KEGG" id="vvu:VV1_2950"/>
<dbReference type="HOGENOM" id="CLU_001981_0_2_6"/>
<dbReference type="Proteomes" id="UP000002275">
    <property type="component" value="Chromosome 1"/>
</dbReference>
<dbReference type="GO" id="GO:0005886">
    <property type="term" value="C:plasma membrane"/>
    <property type="evidence" value="ECO:0007669"/>
    <property type="project" value="UniProtKB-SubCell"/>
</dbReference>
<dbReference type="GO" id="GO:0005524">
    <property type="term" value="F:ATP binding"/>
    <property type="evidence" value="ECO:0007669"/>
    <property type="project" value="UniProtKB-KW"/>
</dbReference>
<dbReference type="GO" id="GO:0003677">
    <property type="term" value="F:DNA binding"/>
    <property type="evidence" value="ECO:0007669"/>
    <property type="project" value="UniProtKB-KW"/>
</dbReference>
<dbReference type="GO" id="GO:0051301">
    <property type="term" value="P:cell division"/>
    <property type="evidence" value="ECO:0007669"/>
    <property type="project" value="UniProtKB-KW"/>
</dbReference>
<dbReference type="GO" id="GO:0007059">
    <property type="term" value="P:chromosome segregation"/>
    <property type="evidence" value="ECO:0007669"/>
    <property type="project" value="UniProtKB-KW"/>
</dbReference>
<dbReference type="CDD" id="cd01127">
    <property type="entry name" value="TrwB_TraG_TraD_VirD4"/>
    <property type="match status" value="1"/>
</dbReference>
<dbReference type="FunFam" id="3.40.50.300:FF:000209">
    <property type="entry name" value="Cell division protein FtsK"/>
    <property type="match status" value="1"/>
</dbReference>
<dbReference type="Gene3D" id="3.30.980.40">
    <property type="match status" value="1"/>
</dbReference>
<dbReference type="Gene3D" id="3.40.50.300">
    <property type="entry name" value="P-loop containing nucleotide triphosphate hydrolases"/>
    <property type="match status" value="1"/>
</dbReference>
<dbReference type="Gene3D" id="1.10.10.10">
    <property type="entry name" value="Winged helix-like DNA-binding domain superfamily/Winged helix DNA-binding domain"/>
    <property type="match status" value="1"/>
</dbReference>
<dbReference type="InterPro" id="IPR050206">
    <property type="entry name" value="FtsK/SpoIIIE/SftA"/>
</dbReference>
<dbReference type="InterPro" id="IPR025199">
    <property type="entry name" value="FtsK_4TM"/>
</dbReference>
<dbReference type="InterPro" id="IPR041027">
    <property type="entry name" value="FtsK_alpha"/>
</dbReference>
<dbReference type="InterPro" id="IPR002543">
    <property type="entry name" value="FtsK_dom"/>
</dbReference>
<dbReference type="InterPro" id="IPR018541">
    <property type="entry name" value="Ftsk_gamma"/>
</dbReference>
<dbReference type="InterPro" id="IPR027417">
    <property type="entry name" value="P-loop_NTPase"/>
</dbReference>
<dbReference type="InterPro" id="IPR036388">
    <property type="entry name" value="WH-like_DNA-bd_sf"/>
</dbReference>
<dbReference type="InterPro" id="IPR036390">
    <property type="entry name" value="WH_DNA-bd_sf"/>
</dbReference>
<dbReference type="PANTHER" id="PTHR22683:SF41">
    <property type="entry name" value="DNA TRANSLOCASE FTSK"/>
    <property type="match status" value="1"/>
</dbReference>
<dbReference type="PANTHER" id="PTHR22683">
    <property type="entry name" value="SPORULATION PROTEIN RELATED"/>
    <property type="match status" value="1"/>
</dbReference>
<dbReference type="Pfam" id="PF13491">
    <property type="entry name" value="FtsK_4TM"/>
    <property type="match status" value="1"/>
</dbReference>
<dbReference type="Pfam" id="PF17854">
    <property type="entry name" value="FtsK_alpha"/>
    <property type="match status" value="1"/>
</dbReference>
<dbReference type="Pfam" id="PF09397">
    <property type="entry name" value="FtsK_gamma"/>
    <property type="match status" value="1"/>
</dbReference>
<dbReference type="Pfam" id="PF01580">
    <property type="entry name" value="FtsK_SpoIIIE"/>
    <property type="match status" value="1"/>
</dbReference>
<dbReference type="SMART" id="SM00843">
    <property type="entry name" value="Ftsk_gamma"/>
    <property type="match status" value="1"/>
</dbReference>
<dbReference type="SUPFAM" id="SSF52540">
    <property type="entry name" value="P-loop containing nucleoside triphosphate hydrolases"/>
    <property type="match status" value="1"/>
</dbReference>
<dbReference type="SUPFAM" id="SSF46785">
    <property type="entry name" value="Winged helix' DNA-binding domain"/>
    <property type="match status" value="1"/>
</dbReference>
<dbReference type="PROSITE" id="PS50901">
    <property type="entry name" value="FTSK"/>
    <property type="match status" value="1"/>
</dbReference>
<proteinExistence type="inferred from homology"/>
<name>FTSK_VIBVU</name>